<proteinExistence type="evidence at protein level"/>
<protein>
    <recommendedName>
        <fullName>Histone H2B, gonadal</fullName>
    </recommendedName>
</protein>
<comment type="function">
    <text>Core component of nucleosome. Nucleosomes wrap and compact DNA into chromatin, limiting DNA accessibility to the cellular machineries which require DNA as a template. Histones thereby play a central role in transcription regulation, DNA repair, DNA replication and chromosomal stability. DNA accessibility is regulated via a complex set of post-translational modifications of histones, also called histone code, and nucleosome remodeling.</text>
</comment>
<comment type="subunit">
    <text>The nucleosome is a histone octamer containing two molecules each of H2A, H2B, H3 and H4 assembled in one H3-H4 heterotetramer and two H2A-H2B heterodimers. The octamer wraps approximately 147 bp of DNA.</text>
</comment>
<comment type="subcellular location">
    <subcellularLocation>
        <location>Nucleus</location>
    </subcellularLocation>
    <subcellularLocation>
        <location>Chromosome</location>
    </subcellularLocation>
</comment>
<comment type="PTM">
    <text evidence="1">Monoubiquitination of Lys-117 gives a specific tag for epigenetic transcriptional activation and is also prerequisite for histone H3 'Lys-4' and 'Lys-79' methylation.</text>
</comment>
<comment type="PTM">
    <text evidence="1">GlcNAcylation at Ser-109 promotes monoubiquitination of Lys-117. It fluctuates in response to extracellular glucose, and associates with transcribed genes (By similarity).</text>
</comment>
<comment type="similarity">
    <text evidence="4">Belongs to the histone H2B family.</text>
</comment>
<reference key="1">
    <citation type="journal article" date="1979" name="Eur. J. Biochem.">
        <title>The complete amino-acid sequence of histone H2B from the mollusc Patella granatina.</title>
        <authorList>
            <person name="van Helden P."/>
            <person name="Strickland W.N."/>
            <person name="Brandt W.F."/>
            <person name="von Holt C."/>
        </authorList>
    </citation>
    <scope>PROTEIN SEQUENCE OF 2-122</scope>
</reference>
<name>H2B_PATGR</name>
<accession>P02284</accession>
<sequence length="122" mass="13525">MPPKVSSKGAKKAGKAKAARSGDKKRKRRRKESYSIYIYKVLKQVHPDTGVSSKAMSIMNSFVNDIFERIAAEASRLAHYNKRSTITSREIQTAVRLLLPGELAKHAVSEGTKAVTKYTSSK</sequence>
<organism>
    <name type="scientific">Patella granatina</name>
    <name type="common">Sandpaper limpet</name>
    <dbReference type="NCBI Taxonomy" id="87972"/>
    <lineage>
        <taxon>Eukaryota</taxon>
        <taxon>Metazoa</taxon>
        <taxon>Spiralia</taxon>
        <taxon>Lophotrochozoa</taxon>
        <taxon>Mollusca</taxon>
        <taxon>Gastropoda</taxon>
        <taxon>Patellogastropoda</taxon>
        <taxon>Patelloidea</taxon>
        <taxon>Patellidae</taxon>
        <taxon>Cymbula</taxon>
    </lineage>
</organism>
<evidence type="ECO:0000250" key="1"/>
<evidence type="ECO:0000256" key="2">
    <source>
        <dbReference type="SAM" id="MobiDB-lite"/>
    </source>
</evidence>
<evidence type="ECO:0000269" key="3">
    <source>
    </source>
</evidence>
<evidence type="ECO:0000305" key="4"/>
<keyword id="KW-0158">Chromosome</keyword>
<keyword id="KW-0903">Direct protein sequencing</keyword>
<keyword id="KW-0238">DNA-binding</keyword>
<keyword id="KW-0325">Glycoprotein</keyword>
<keyword id="KW-1017">Isopeptide bond</keyword>
<keyword id="KW-0544">Nucleosome core</keyword>
<keyword id="KW-0539">Nucleus</keyword>
<keyword id="KW-0832">Ubl conjugation</keyword>
<dbReference type="PIR" id="A02611">
    <property type="entry name" value="HSKP22"/>
</dbReference>
<dbReference type="SMR" id="P02284"/>
<dbReference type="GO" id="GO:0000786">
    <property type="term" value="C:nucleosome"/>
    <property type="evidence" value="ECO:0007669"/>
    <property type="project" value="UniProtKB-KW"/>
</dbReference>
<dbReference type="GO" id="GO:0005634">
    <property type="term" value="C:nucleus"/>
    <property type="evidence" value="ECO:0007669"/>
    <property type="project" value="UniProtKB-SubCell"/>
</dbReference>
<dbReference type="GO" id="GO:0003677">
    <property type="term" value="F:DNA binding"/>
    <property type="evidence" value="ECO:0007669"/>
    <property type="project" value="UniProtKB-KW"/>
</dbReference>
<dbReference type="GO" id="GO:0046982">
    <property type="term" value="F:protein heterodimerization activity"/>
    <property type="evidence" value="ECO:0007669"/>
    <property type="project" value="InterPro"/>
</dbReference>
<dbReference type="GO" id="GO:0044877">
    <property type="term" value="F:protein-containing complex binding"/>
    <property type="evidence" value="ECO:0000250"/>
    <property type="project" value="UniProtKB"/>
</dbReference>
<dbReference type="GO" id="GO:0030527">
    <property type="term" value="F:structural constituent of chromatin"/>
    <property type="evidence" value="ECO:0007669"/>
    <property type="project" value="InterPro"/>
</dbReference>
<dbReference type="CDD" id="cd22910">
    <property type="entry name" value="HFD_H2B"/>
    <property type="match status" value="1"/>
</dbReference>
<dbReference type="FunFam" id="1.10.20.10:FF:000016">
    <property type="entry name" value="Histone H2B"/>
    <property type="match status" value="1"/>
</dbReference>
<dbReference type="Gene3D" id="1.10.20.10">
    <property type="entry name" value="Histone, subunit A"/>
    <property type="match status" value="1"/>
</dbReference>
<dbReference type="InterPro" id="IPR009072">
    <property type="entry name" value="Histone-fold"/>
</dbReference>
<dbReference type="InterPro" id="IPR007125">
    <property type="entry name" value="Histone_H2A/H2B/H3"/>
</dbReference>
<dbReference type="InterPro" id="IPR000558">
    <property type="entry name" value="Histone_H2B"/>
</dbReference>
<dbReference type="InterPro" id="IPR055333">
    <property type="entry name" value="HISTONE_H2B_site"/>
</dbReference>
<dbReference type="PANTHER" id="PTHR23428">
    <property type="entry name" value="HISTONE H2B"/>
    <property type="match status" value="1"/>
</dbReference>
<dbReference type="Pfam" id="PF00125">
    <property type="entry name" value="Histone"/>
    <property type="match status" value="1"/>
</dbReference>
<dbReference type="PRINTS" id="PR00621">
    <property type="entry name" value="HISTONEH2B"/>
</dbReference>
<dbReference type="SMART" id="SM00427">
    <property type="entry name" value="H2B"/>
    <property type="match status" value="1"/>
</dbReference>
<dbReference type="SUPFAM" id="SSF47113">
    <property type="entry name" value="Histone-fold"/>
    <property type="match status" value="1"/>
</dbReference>
<dbReference type="PROSITE" id="PS00357">
    <property type="entry name" value="HISTONE_H2B"/>
    <property type="match status" value="1"/>
</dbReference>
<feature type="initiator methionine" description="Removed" evidence="3">
    <location>
        <position position="1"/>
    </location>
</feature>
<feature type="chain" id="PRO_0000071877" description="Histone H2B, gonadal">
    <location>
        <begin position="2"/>
        <end position="122"/>
    </location>
</feature>
<feature type="region of interest" description="Disordered" evidence="2">
    <location>
        <begin position="1"/>
        <end position="31"/>
    </location>
</feature>
<feature type="compositionally biased region" description="Basic residues" evidence="2">
    <location>
        <begin position="9"/>
        <end position="31"/>
    </location>
</feature>
<feature type="glycosylation site" description="O-linked (GlcNAc) serine" evidence="1">
    <location>
        <position position="109"/>
    </location>
</feature>
<feature type="cross-link" description="Glycyl lysine isopeptide (Lys-Gly) (interchain with G-Cter in ubiquitin)" evidence="1">
    <location>
        <position position="117"/>
    </location>
</feature>